<comment type="function">
    <text evidence="3 5">Involved in sporozoite infection of hepatocytes and replication therein.</text>
</comment>
<comment type="subcellular location">
    <subcellularLocation>
        <location>Cell membrane</location>
    </subcellularLocation>
    <subcellularLocation>
        <location>Cell surface</location>
    </subcellularLocation>
    <text evidence="6">Present on the surface of sporozoite.</text>
</comment>
<comment type="developmental stage">
    <text evidence="4">Expressed both in gametocytes and in liver-infective sporozoites.</text>
</comment>
<comment type="disruption phenotype">
    <text evidence="3 5">Attenuated parasites that cannot commit to infection, even when they encounter with hepatocytes, resulting in continuous traversal of hepatocytes. Cells lacking both PBS36 and P52/PBS36P are severely affected in their capability to develop into liver stage parasites and abort development soon after invasion; possibly due to the absence of a parasitophorous vacuole membrane (PVM).</text>
</comment>
<reference key="1">
    <citation type="journal article" date="2001" name="Mol. Biochem. Parasitol.">
        <title>Comparative genomics in Plasmodium: a tool for the identification of genes and functional analysis.</title>
        <authorList>
            <person name="Thompson J."/>
            <person name="Janse C.J."/>
            <person name="Waters A.P."/>
        </authorList>
    </citation>
    <scope>NUCLEOTIDE SEQUENCE [GENOMIC DNA]</scope>
    <source>
        <strain>ANKA</strain>
    </source>
</reference>
<reference evidence="8" key="2">
    <citation type="journal article" date="2014" name="BMC Biol.">
        <title>A comprehensive evaluation of rodent malaria parasite genomes and gene expression.</title>
        <authorList>
            <person name="Otto T.D."/>
            <person name="Bohme U."/>
            <person name="Jackson A.P."/>
            <person name="Hunt M."/>
            <person name="Franke-Fayard B."/>
            <person name="Hoeijmakers W.A."/>
            <person name="Religa A.A."/>
            <person name="Robertson L."/>
            <person name="Sanders M."/>
            <person name="Ogun S.A."/>
            <person name="Cunningham D."/>
            <person name="Erhart A."/>
            <person name="Billker O."/>
            <person name="Khan S.M."/>
            <person name="Stunnenberg H.G."/>
            <person name="Langhorne J."/>
            <person name="Holder A.A."/>
            <person name="Waters A.P."/>
            <person name="Newbold C.I."/>
            <person name="Pain A."/>
            <person name="Berriman M."/>
            <person name="Janse C.J."/>
        </authorList>
    </citation>
    <scope>NUCLEOTIDE SEQUENCE [LARGE SCALE GENOMIC DNA]</scope>
    <source>
        <strain evidence="8">ANKA</strain>
    </source>
</reference>
<reference key="3">
    <citation type="journal article" date="2005" name="Mol. Microbiol.">
        <title>Two proteins with 6-cys motifs are required for malarial parasites to commit to infection of the hepatocyte.</title>
        <authorList>
            <person name="Ishino T."/>
            <person name="Chinzei Y."/>
            <person name="Yuda M."/>
        </authorList>
    </citation>
    <scope>FUNCTION</scope>
    <scope>DISRUPTION PHENOTYPE</scope>
    <source>
        <strain>ANKA</strain>
    </source>
</reference>
<reference key="4">
    <citation type="journal article" date="2010" name="PLoS Pathog.">
        <title>Three members of the 6-cys protein family of Plasmodium play a role in gamete fertility.</title>
        <authorList>
            <person name="van Dijk M.R."/>
            <person name="van Schaijk B.C."/>
            <person name="Khan S.M."/>
            <person name="van Dooren M.W."/>
            <person name="Ramesar J."/>
            <person name="Kaczanowski S."/>
            <person name="van Gemert G.J."/>
            <person name="Kroeze H."/>
            <person name="Stunnenberg H.G."/>
            <person name="Eling W.M."/>
            <person name="Sauerwein R.W."/>
            <person name="Waters A.P."/>
            <person name="Janse C.J."/>
        </authorList>
    </citation>
    <scope>DEVELOPMENTAL STAGE</scope>
    <source>
        <strain>ANKA</strain>
    </source>
</reference>
<reference key="5">
    <citation type="journal article" date="2012" name="PLoS ONE">
        <title>Plasmodium berghei Deltap52&amp;p36 parasites develop independent of a parasitophorous vacuole membrane in Huh-7 liver cells.</title>
        <authorList>
            <person name="Ploemen I.H."/>
            <person name="Croes H.J."/>
            <person name="van Gemert G.J."/>
            <person name="Wijers-Rouw M."/>
            <person name="Hermsen C.C."/>
            <person name="Sauerwein R.W."/>
        </authorList>
    </citation>
    <scope>FUNCTION</scope>
    <scope>DISRUPTION PHENOTYPE</scope>
    <source>
        <strain>ANKA</strain>
    </source>
</reference>
<accession>Q4Z4D1</accession>
<accession>A0A509AME7</accession>
<accession>Q962H5</accession>
<sequence length="352" mass="40684">MKQYEFARHINTYFSVAQNMLFSIFLYYAFSLLIFLSIFVFKMRKALYSLLFYMCICLYIYTPVFMASLKEIEVGNYFICNLKDYPTGNCSVNHDYNKTIKLLCPIIHNKNNSDKTYDPSYCFKYDGIKDEFIINNKQNYIHNTLPGVILKSHIENDTYNLSIYPPFVVKEDITIVCICDSEKGNEGITPYLKINIKKAHGLNNDLEGDYIKGCDYGNNKGKYQFLTKSIKYTIDPICEIHAYPGDIVGINCNNYTTKIQDVSLEPNSCFGMVYFSILTMVFVKTNVNNVMPNAKYYPDLASHHGNQNSKMFLTAYLLIPNEIERDILIYCTCSYNGNKGLAIYHIFSTKED</sequence>
<evidence type="ECO:0000255" key="1"/>
<evidence type="ECO:0000255" key="2">
    <source>
        <dbReference type="PROSITE-ProRule" id="PRU01038"/>
    </source>
</evidence>
<evidence type="ECO:0000269" key="3">
    <source>
    </source>
</evidence>
<evidence type="ECO:0000269" key="4">
    <source>
    </source>
</evidence>
<evidence type="ECO:0000269" key="5">
    <source>
    </source>
</evidence>
<evidence type="ECO:0000305" key="6"/>
<evidence type="ECO:0000312" key="7">
    <source>
        <dbReference type="EMBL" id="VUC56019.1"/>
    </source>
</evidence>
<evidence type="ECO:0000312" key="8">
    <source>
        <dbReference type="Proteomes" id="UP000074855"/>
    </source>
</evidence>
<keyword id="KW-1003">Cell membrane</keyword>
<keyword id="KW-1015">Disulfide bond</keyword>
<keyword id="KW-0325">Glycoprotein</keyword>
<keyword id="KW-0461">Malaria</keyword>
<keyword id="KW-0472">Membrane</keyword>
<keyword id="KW-1185">Reference proteome</keyword>
<keyword id="KW-0677">Repeat</keyword>
<keyword id="KW-0732">Signal</keyword>
<protein>
    <recommendedName>
        <fullName>Sporozoite surface protein P36</fullName>
    </recommendedName>
</protein>
<name>PF36_PLABA</name>
<dbReference type="EMBL" id="AY033091">
    <property type="protein sequence ID" value="AAK57743.1"/>
    <property type="molecule type" value="Genomic_DNA"/>
</dbReference>
<dbReference type="EMBL" id="LK023125">
    <property type="protein sequence ID" value="VUC56019.1"/>
    <property type="molecule type" value="Genomic_DNA"/>
</dbReference>
<dbReference type="SMR" id="Q4Z4D1"/>
<dbReference type="STRING" id="5823.A0A509AME7"/>
<dbReference type="GlyCosmos" id="Q4Z4D1">
    <property type="glycosylation" value="6 sites, No reported glycans"/>
</dbReference>
<dbReference type="VEuPathDB" id="PlasmoDB:PBANKA_1002100"/>
<dbReference type="eggNOG" id="ENOG502TN9C">
    <property type="taxonomic scope" value="Eukaryota"/>
</dbReference>
<dbReference type="HOGENOM" id="CLU_786380_0_0_1"/>
<dbReference type="InParanoid" id="A0A509AME7"/>
<dbReference type="OMA" id="PSNCFST"/>
<dbReference type="Proteomes" id="UP000074855">
    <property type="component" value="Chromosome 10"/>
</dbReference>
<dbReference type="GO" id="GO:0009986">
    <property type="term" value="C:cell surface"/>
    <property type="evidence" value="ECO:0007669"/>
    <property type="project" value="UniProtKB-SubCell"/>
</dbReference>
<dbReference type="GO" id="GO:0005886">
    <property type="term" value="C:plasma membrane"/>
    <property type="evidence" value="ECO:0007669"/>
    <property type="project" value="UniProtKB-SubCell"/>
</dbReference>
<dbReference type="Gene3D" id="2.60.40.2860">
    <property type="match status" value="2"/>
</dbReference>
<dbReference type="InterPro" id="IPR010884">
    <property type="entry name" value="6_CYS_dom"/>
</dbReference>
<dbReference type="InterPro" id="IPR038160">
    <property type="entry name" value="6_CYS_dom_sf"/>
</dbReference>
<dbReference type="Pfam" id="PF07422">
    <property type="entry name" value="s48_45"/>
    <property type="match status" value="1"/>
</dbReference>
<dbReference type="SMART" id="SM00970">
    <property type="entry name" value="s48_45"/>
    <property type="match status" value="1"/>
</dbReference>
<dbReference type="PROSITE" id="PS51701">
    <property type="entry name" value="6_CYS"/>
    <property type="match status" value="2"/>
</dbReference>
<proteinExistence type="evidence at transcript level"/>
<gene>
    <name type="primary">PBS36</name>
    <name type="ORF">PB000892.00.0</name>
    <name evidence="7" type="ORF">PBANKA_1002100</name>
</gene>
<organism>
    <name type="scientific">Plasmodium berghei (strain Anka)</name>
    <dbReference type="NCBI Taxonomy" id="5823"/>
    <lineage>
        <taxon>Eukaryota</taxon>
        <taxon>Sar</taxon>
        <taxon>Alveolata</taxon>
        <taxon>Apicomplexa</taxon>
        <taxon>Aconoidasida</taxon>
        <taxon>Haemosporida</taxon>
        <taxon>Plasmodiidae</taxon>
        <taxon>Plasmodium</taxon>
        <taxon>Plasmodium (Vinckeia)</taxon>
    </lineage>
</organism>
<feature type="signal peptide" evidence="1">
    <location>
        <begin position="1"/>
        <end position="29"/>
    </location>
</feature>
<feature type="chain" id="PRO_0000423571" description="Sporozoite surface protein P36">
    <location>
        <begin position="30"/>
        <end position="352"/>
    </location>
</feature>
<feature type="domain" description="6-Cys 1" evidence="2">
    <location>
        <begin position="53"/>
        <end position="199"/>
    </location>
</feature>
<feature type="domain" description="6-Cys 2" evidence="2">
    <location>
        <begin position="210"/>
        <end position="351"/>
    </location>
</feature>
<feature type="glycosylation site" description="N-linked (GlcNAc...) asparagine" evidence="1">
    <location>
        <position position="89"/>
    </location>
</feature>
<feature type="glycosylation site" description="N-linked (GlcNAc...) asparagine" evidence="1">
    <location>
        <position position="97"/>
    </location>
</feature>
<feature type="glycosylation site" description="N-linked (GlcNAc...) asparagine" evidence="1">
    <location>
        <position position="111"/>
    </location>
</feature>
<feature type="glycosylation site" description="N-linked (GlcNAc...) asparagine" evidence="1">
    <location>
        <position position="156"/>
    </location>
</feature>
<feature type="glycosylation site" description="N-linked (GlcNAc...) asparagine" evidence="1">
    <location>
        <position position="160"/>
    </location>
</feature>
<feature type="glycosylation site" description="N-linked (GlcNAc...) asparagine" evidence="1">
    <location>
        <position position="254"/>
    </location>
</feature>
<feature type="disulfide bond" evidence="2">
    <location>
        <begin position="57"/>
        <end position="90"/>
    </location>
</feature>
<feature type="disulfide bond" evidence="2">
    <location>
        <begin position="104"/>
        <end position="179"/>
    </location>
</feature>
<feature type="disulfide bond" evidence="2">
    <location>
        <begin position="122"/>
        <end position="177"/>
    </location>
</feature>
<feature type="disulfide bond" evidence="2">
    <location>
        <begin position="214"/>
        <end position="238"/>
    </location>
</feature>
<feature type="disulfide bond" evidence="2">
    <location>
        <begin position="252"/>
        <end position="333"/>
    </location>
</feature>
<feature type="disulfide bond" evidence="2">
    <location>
        <begin position="269"/>
        <end position="331"/>
    </location>
</feature>
<feature type="sequence conflict" description="In Ref. 1; AAK57743." evidence="6" ref="1">
    <original>N</original>
    <variation>T</variation>
    <location>
        <position position="195"/>
    </location>
</feature>